<organism>
    <name type="scientific">Acinetobacter baylyi (strain ATCC 33305 / BD413 / ADP1)</name>
    <dbReference type="NCBI Taxonomy" id="62977"/>
    <lineage>
        <taxon>Bacteria</taxon>
        <taxon>Pseudomonadati</taxon>
        <taxon>Pseudomonadota</taxon>
        <taxon>Gammaproteobacteria</taxon>
        <taxon>Moraxellales</taxon>
        <taxon>Moraxellaceae</taxon>
        <taxon>Acinetobacter</taxon>
    </lineage>
</organism>
<protein>
    <recommendedName>
        <fullName>FAD assembly factor SdhE</fullName>
    </recommendedName>
</protein>
<evidence type="ECO:0000250" key="1">
    <source>
        <dbReference type="UniProtKB" id="G4V4G2"/>
    </source>
</evidence>
<evidence type="ECO:0000305" key="2"/>
<sequence>MSEELTLEERKVIYRARRGLKEIDVYFDPYVKNYYLTAPASEKALFAELVAQEDPDLLDWFMEVSEPPQVELKQLIQKLKHYVHG</sequence>
<keyword id="KW-0143">Chaperone</keyword>
<keyword id="KW-0963">Cytoplasm</keyword>
<gene>
    <name type="primary">sdhE</name>
    <name type="ordered locus">ACIAD3189</name>
</gene>
<reference key="1">
    <citation type="journal article" date="2004" name="Nucleic Acids Res.">
        <title>Unique features revealed by the genome sequence of Acinetobacter sp. ADP1, a versatile and naturally transformation competent bacterium.</title>
        <authorList>
            <person name="Barbe V."/>
            <person name="Vallenet D."/>
            <person name="Fonknechten N."/>
            <person name="Kreimeyer A."/>
            <person name="Oztas S."/>
            <person name="Labarre L."/>
            <person name="Cruveiller S."/>
            <person name="Robert C."/>
            <person name="Duprat S."/>
            <person name="Wincker P."/>
            <person name="Ornston L.N."/>
            <person name="Weissenbach J."/>
            <person name="Marliere P."/>
            <person name="Cohen G.N."/>
            <person name="Medigue C."/>
        </authorList>
    </citation>
    <scope>NUCLEOTIDE SEQUENCE [LARGE SCALE GENOMIC DNA]</scope>
    <source>
        <strain>ATCC 33305 / BD413 / ADP1</strain>
    </source>
</reference>
<feature type="chain" id="PRO_0000214391" description="FAD assembly factor SdhE">
    <location>
        <begin position="1"/>
        <end position="85"/>
    </location>
</feature>
<dbReference type="EMBL" id="CR543861">
    <property type="protein sequence ID" value="CAG69874.1"/>
    <property type="molecule type" value="Genomic_DNA"/>
</dbReference>
<dbReference type="RefSeq" id="WP_004924176.1">
    <property type="nucleotide sequence ID" value="NC_005966.1"/>
</dbReference>
<dbReference type="SMR" id="Q6F7U1"/>
<dbReference type="STRING" id="202950.GCA_001485005_02965"/>
<dbReference type="GeneID" id="45235405"/>
<dbReference type="KEGG" id="aci:ACIAD3189"/>
<dbReference type="eggNOG" id="COG2938">
    <property type="taxonomic scope" value="Bacteria"/>
</dbReference>
<dbReference type="HOGENOM" id="CLU_103054_2_0_6"/>
<dbReference type="OrthoDB" id="9180899at2"/>
<dbReference type="BioCyc" id="ASP62977:ACIAD_RS14450-MONOMER"/>
<dbReference type="Proteomes" id="UP000000430">
    <property type="component" value="Chromosome"/>
</dbReference>
<dbReference type="GO" id="GO:0005737">
    <property type="term" value="C:cytoplasm"/>
    <property type="evidence" value="ECO:0007669"/>
    <property type="project" value="UniProtKB-SubCell"/>
</dbReference>
<dbReference type="GO" id="GO:0006105">
    <property type="term" value="P:succinate metabolic process"/>
    <property type="evidence" value="ECO:0007669"/>
    <property type="project" value="TreeGrafter"/>
</dbReference>
<dbReference type="Gene3D" id="1.10.150.250">
    <property type="entry name" value="Flavinator of succinate dehydrogenase"/>
    <property type="match status" value="1"/>
</dbReference>
<dbReference type="InterPro" id="IPR005631">
    <property type="entry name" value="SDH"/>
</dbReference>
<dbReference type="InterPro" id="IPR036714">
    <property type="entry name" value="SDH_sf"/>
</dbReference>
<dbReference type="InterPro" id="IPR050531">
    <property type="entry name" value="SdhE_FAD_assembly_factor"/>
</dbReference>
<dbReference type="PANTHER" id="PTHR39585">
    <property type="entry name" value="FAD ASSEMBLY FACTOR SDHE"/>
    <property type="match status" value="1"/>
</dbReference>
<dbReference type="PANTHER" id="PTHR39585:SF1">
    <property type="entry name" value="FAD ASSEMBLY FACTOR SDHE"/>
    <property type="match status" value="1"/>
</dbReference>
<dbReference type="Pfam" id="PF03937">
    <property type="entry name" value="Sdh5"/>
    <property type="match status" value="1"/>
</dbReference>
<dbReference type="SUPFAM" id="SSF109910">
    <property type="entry name" value="YgfY-like"/>
    <property type="match status" value="1"/>
</dbReference>
<name>SDHE_ACIAD</name>
<accession>Q6F7U1</accession>
<proteinExistence type="inferred from homology"/>
<comment type="function">
    <text evidence="1">An FAD assembly protein, which accelerates covalent attachment of the cofactor into other proteins. Plays an essential role in the assembly of succinate dehydrogenase (SDH, respiratory complex II), an enzyme complex that is a component of both the tricarboxylic acid cycle and the electron transport chain, and which couples the oxidation of succinate to fumarate with the reduction of ubiquinone (coenzyme Q) to ubiquinol. Required for flavinylation (covalent attachment of FAD) of the flavoprotein subunit SdhA of SDH and other flavinylated proteins as well.</text>
</comment>
<comment type="subcellular location">
    <subcellularLocation>
        <location evidence="1">Cytoplasm</location>
    </subcellularLocation>
</comment>
<comment type="similarity">
    <text evidence="2">Belongs to the SdhE FAD assembly factor family.</text>
</comment>